<name>DPOLL_ORYSJ</name>
<accession>Q67VC8</accession>
<accession>Q0DDB2</accession>
<accession>Q6L9M0</accession>
<proteinExistence type="evidence at protein level"/>
<reference key="1">
    <citation type="journal article" date="2004" name="Eur. J. Biochem.">
        <title>Plant DNA polymerase lambda, a DNA repair enzyme that functions in plant meristematic and meiotic tissues.</title>
        <authorList>
            <person name="Uchiyama Y."/>
            <person name="Kimura S."/>
            <person name="Yamamoto T."/>
            <person name="Ishibashi T."/>
            <person name="Sakaguchi K."/>
        </authorList>
    </citation>
    <scope>NUCLEOTIDE SEQUENCE [MRNA]</scope>
    <scope>FUNCTION</scope>
    <scope>CATALYTIC ACTIVITY</scope>
    <scope>COFACTOR</scope>
    <scope>INTERACTION WITH PCNA</scope>
    <scope>TISSUE SPECIFICITY</scope>
    <scope>INDUCTION</scope>
    <scope>MUTAGENESIS OF ASP-397 AND ASP-399</scope>
    <source>
        <strain>cv. Nipponbare</strain>
    </source>
</reference>
<reference key="2">
    <citation type="journal article" date="2005" name="Nature">
        <title>The map-based sequence of the rice genome.</title>
        <authorList>
            <consortium name="International rice genome sequencing project (IRGSP)"/>
        </authorList>
    </citation>
    <scope>NUCLEOTIDE SEQUENCE [LARGE SCALE GENOMIC DNA]</scope>
    <source>
        <strain>cv. Nipponbare</strain>
    </source>
</reference>
<reference key="3">
    <citation type="journal article" date="2008" name="Nucleic Acids Res.">
        <title>The rice annotation project database (RAP-DB): 2008 update.</title>
        <authorList>
            <consortium name="The rice annotation project (RAP)"/>
        </authorList>
    </citation>
    <scope>GENOME REANNOTATION</scope>
    <source>
        <strain>cv. Nipponbare</strain>
    </source>
</reference>
<reference key="4">
    <citation type="journal article" date="2013" name="Rice">
        <title>Improvement of the Oryza sativa Nipponbare reference genome using next generation sequence and optical map data.</title>
        <authorList>
            <person name="Kawahara Y."/>
            <person name="de la Bastide M."/>
            <person name="Hamilton J.P."/>
            <person name="Kanamori H."/>
            <person name="McCombie W.R."/>
            <person name="Ouyang S."/>
            <person name="Schwartz D.C."/>
            <person name="Tanaka T."/>
            <person name="Wu J."/>
            <person name="Zhou S."/>
            <person name="Childs K.L."/>
            <person name="Davidson R.M."/>
            <person name="Lin H."/>
            <person name="Quesada-Ocampo L."/>
            <person name="Vaillancourt B."/>
            <person name="Sakai H."/>
            <person name="Lee S.S."/>
            <person name="Kim J."/>
            <person name="Numa H."/>
            <person name="Itoh T."/>
            <person name="Buell C.R."/>
            <person name="Matsumoto T."/>
        </authorList>
    </citation>
    <scope>GENOME REANNOTATION</scope>
    <source>
        <strain>cv. Nipponbare</strain>
    </source>
</reference>
<evidence type="ECO:0000250" key="1"/>
<evidence type="ECO:0000250" key="2">
    <source>
        <dbReference type="UniProtKB" id="Q9UGP5"/>
    </source>
</evidence>
<evidence type="ECO:0000255" key="3">
    <source>
        <dbReference type="PROSITE-ProRule" id="PRU00033"/>
    </source>
</evidence>
<evidence type="ECO:0000256" key="4">
    <source>
        <dbReference type="SAM" id="MobiDB-lite"/>
    </source>
</evidence>
<evidence type="ECO:0000269" key="5">
    <source>
    </source>
</evidence>
<evidence type="ECO:0000303" key="6">
    <source>
    </source>
</evidence>
<evidence type="ECO:0000305" key="7"/>
<evidence type="ECO:0000312" key="8">
    <source>
        <dbReference type="EMBL" id="BAD18976.1"/>
    </source>
</evidence>
<evidence type="ECO:0000312" key="9">
    <source>
        <dbReference type="EMBL" id="BAS96965.1"/>
    </source>
</evidence>
<keyword id="KW-0227">DNA damage</keyword>
<keyword id="KW-0234">DNA repair</keyword>
<keyword id="KW-0235">DNA replication</keyword>
<keyword id="KW-0237">DNA synthesis</keyword>
<keyword id="KW-0238">DNA-binding</keyword>
<keyword id="KW-0239">DNA-directed DNA polymerase</keyword>
<keyword id="KW-0456">Lyase</keyword>
<keyword id="KW-0464">Manganese</keyword>
<keyword id="KW-0479">Metal-binding</keyword>
<keyword id="KW-0548">Nucleotidyltransferase</keyword>
<keyword id="KW-0539">Nucleus</keyword>
<keyword id="KW-1185">Reference proteome</keyword>
<keyword id="KW-0808">Transferase</keyword>
<gene>
    <name evidence="7" type="primary">POLL</name>
    <name evidence="9" type="ordered locus">Os06g0237200</name>
    <name evidence="7" type="ordered locus">LOC_Os06g13020</name>
    <name evidence="8" type="ORF">OSJNBa0068B06.5</name>
</gene>
<protein>
    <recommendedName>
        <fullName>DNA polymerase lambda</fullName>
        <shortName evidence="6">OsPolL</shortName>
        <shortName evidence="7">Pol Lambda</shortName>
        <ecNumber evidence="5">2.7.7.7</ecNumber>
        <ecNumber evidence="7">4.2.99.-</ecNumber>
    </recommendedName>
</protein>
<comment type="function">
    <text evidence="5">Repair polymerase involved in base excision repair (BER) and responsible for repair of lesions that give rise to abasic (AP) sites in DNA. Has both DNA polymerase and terminal transferase activities. Has a 5'-deoxyribose-5-phosphate lyase (dRP lyase) activity.</text>
</comment>
<comment type="catalytic activity">
    <reaction evidence="5">
        <text>DNA(n) + a 2'-deoxyribonucleoside 5'-triphosphate = DNA(n+1) + diphosphate</text>
        <dbReference type="Rhea" id="RHEA:22508"/>
        <dbReference type="Rhea" id="RHEA-COMP:17339"/>
        <dbReference type="Rhea" id="RHEA-COMP:17340"/>
        <dbReference type="ChEBI" id="CHEBI:33019"/>
        <dbReference type="ChEBI" id="CHEBI:61560"/>
        <dbReference type="ChEBI" id="CHEBI:173112"/>
        <dbReference type="EC" id="2.7.7.7"/>
    </reaction>
</comment>
<comment type="cofactor">
    <cofactor evidence="5">
        <name>Mn(2+)</name>
        <dbReference type="ChEBI" id="CHEBI:29035"/>
    </cofactor>
</comment>
<comment type="subunit">
    <text evidence="5">Interacts with PCNA.</text>
</comment>
<comment type="subcellular location">
    <subcellularLocation>
        <location evidence="7">Nucleus</location>
    </subcellularLocation>
</comment>
<comment type="tissue specificity">
    <text evidence="5">Expressed in proliferating tissues. Expressed in roots, root apex, young leaves, shoot apical meristem (SAM), flag leaves and panicles.</text>
</comment>
<comment type="induction">
    <text evidence="5">By UV treatment and methyl methanesulfonate (MMS).</text>
</comment>
<comment type="similarity">
    <text evidence="7">Belongs to the DNA polymerase type-X family.</text>
</comment>
<comment type="sequence caution" evidence="7">
    <conflict type="erroneous gene model prediction">
        <sequence resource="EMBL-CDS" id="BAF19161"/>
    </conflict>
</comment>
<comment type="sequence caution" evidence="7">
    <conflict type="erroneous gene model prediction">
        <sequence resource="EMBL-CDS" id="BAS96965"/>
    </conflict>
</comment>
<organism>
    <name type="scientific">Oryza sativa subsp. japonica</name>
    <name type="common">Rice</name>
    <dbReference type="NCBI Taxonomy" id="39947"/>
    <lineage>
        <taxon>Eukaryota</taxon>
        <taxon>Viridiplantae</taxon>
        <taxon>Streptophyta</taxon>
        <taxon>Embryophyta</taxon>
        <taxon>Tracheophyta</taxon>
        <taxon>Spermatophyta</taxon>
        <taxon>Magnoliopsida</taxon>
        <taxon>Liliopsida</taxon>
        <taxon>Poales</taxon>
        <taxon>Poaceae</taxon>
        <taxon>BOP clade</taxon>
        <taxon>Oryzoideae</taxon>
        <taxon>Oryzeae</taxon>
        <taxon>Oryzinae</taxon>
        <taxon>Oryza</taxon>
        <taxon>Oryza sativa</taxon>
    </lineage>
</organism>
<feature type="chain" id="PRO_0000438213" description="DNA polymerase lambda">
    <location>
        <begin position="1"/>
        <end position="549"/>
    </location>
</feature>
<feature type="domain" description="BRCT" evidence="3">
    <location>
        <begin position="17"/>
        <end position="116"/>
    </location>
</feature>
<feature type="region of interest" description="Disordered" evidence="4">
    <location>
        <begin position="126"/>
        <end position="197"/>
    </location>
</feature>
<feature type="region of interest" description="DNA-binding" evidence="2">
    <location>
        <begin position="233"/>
        <end position="247"/>
    </location>
</feature>
<feature type="region of interest" description="DNA-binding" evidence="2">
    <location>
        <begin position="315"/>
        <end position="318"/>
    </location>
</feature>
<feature type="region of interest" description="Involved in primer binding" evidence="1">
    <location>
        <begin position="390"/>
        <end position="399"/>
    </location>
</feature>
<feature type="region of interest" description="DNA-binding" evidence="2">
    <location>
        <begin position="438"/>
        <end position="479"/>
    </location>
</feature>
<feature type="compositionally biased region" description="Basic and acidic residues" evidence="4">
    <location>
        <begin position="149"/>
        <end position="175"/>
    </location>
</feature>
<feature type="compositionally biased region" description="Polar residues" evidence="4">
    <location>
        <begin position="180"/>
        <end position="197"/>
    </location>
</feature>
<feature type="active site" evidence="7">
    <location>
        <position position="280"/>
    </location>
</feature>
<feature type="binding site" evidence="2">
    <location>
        <position position="356"/>
    </location>
    <ligand>
        <name>dCTP</name>
        <dbReference type="ChEBI" id="CHEBI:61481"/>
    </ligand>
</feature>
<feature type="binding site" evidence="2">
    <location>
        <begin position="387"/>
        <end position="390"/>
    </location>
    <ligand>
        <name>dCTP</name>
        <dbReference type="ChEBI" id="CHEBI:61481"/>
    </ligand>
</feature>
<feature type="binding site" evidence="2">
    <location>
        <begin position="396"/>
        <end position="399"/>
    </location>
    <ligand>
        <name>dCTP</name>
        <dbReference type="ChEBI" id="CHEBI:61481"/>
    </ligand>
</feature>
<feature type="binding site" evidence="2">
    <location>
        <position position="397"/>
    </location>
    <ligand>
        <name>Mn(2+)</name>
        <dbReference type="ChEBI" id="CHEBI:29035"/>
    </ligand>
</feature>
<feature type="binding site" evidence="2">
    <location>
        <position position="399"/>
    </location>
    <ligand>
        <name>Mn(2+)</name>
        <dbReference type="ChEBI" id="CHEBI:29035"/>
    </ligand>
</feature>
<feature type="binding site" evidence="2">
    <location>
        <position position="464"/>
    </location>
    <ligand>
        <name>Mn(2+)</name>
        <dbReference type="ChEBI" id="CHEBI:29035"/>
    </ligand>
</feature>
<feature type="binding site" evidence="2">
    <location>
        <position position="487"/>
    </location>
    <ligand>
        <name>dCTP</name>
        <dbReference type="ChEBI" id="CHEBI:61481"/>
    </ligand>
</feature>
<feature type="mutagenesis site" description="Loss of polymerase activity; when associated with A-399." evidence="5">
    <original>D</original>
    <variation>A</variation>
    <location>
        <position position="397"/>
    </location>
</feature>
<feature type="mutagenesis site" description="Loss of polymerase activity; when associated with A-397." evidence="5">
    <original>D</original>
    <variation>A</variation>
    <location>
        <position position="399"/>
    </location>
</feature>
<feature type="sequence conflict" description="In Ref. 1; BAD18976." evidence="7" ref="1">
    <original>A</original>
    <variation>AAAA</variation>
    <location>
        <position position="11"/>
    </location>
</feature>
<feature type="sequence conflict" description="In Ref. 1; BAD18976." evidence="7" ref="1">
    <original>G</original>
    <variation>D</variation>
    <location>
        <position position="423"/>
    </location>
</feature>
<sequence length="549" mass="60628">MAPKRKPPARAAAAKLDPDGMFRGVSAFVVPHAVQSRRLEVWKQRLAQMGGRVQEKLAAKGGGGAVTHVLAADAKALLRELDAAWLHRFRGSVVSFEWLEECLKSGERLPEHKFAINYEEEFKPKKEGGAAGSGVLQSAKRSKISSDGPENRKETAGGNRESRDAIAHPNEDSDVVKGPSTCTSSQSASGDSKETIASQNAFKAEEASSGESSTYAPPDLNRNITEIFGKLINIYRALGDDRRSFSYYKAIPVIEKLPFKIESADQVKDLPAIGKSLKDHINEIVNTGKLSKLEHFENDEKVRTVSLFGEVWGVGPATALKLYDKGHRTLDDLQKDDSLTSAQRIGLKFFDDIKQRIPRHEVSEMEKLLQEVGTDILPGVIIVCGGSYRRGKSSCGDMDIIITHPDGESHVGFLPKFVQRLKGINFLREDLIFSIHSIEGTDCGVDTYFGLCTYPGRELRHRIDLKVYPRNRHAFGLLAWTGNDVLNRRLRILADSKGYILDDTGLYLATPGSGGKRGGRSDAIINCDTEKDVFDTLGFPWLEPHERNL</sequence>
<dbReference type="EC" id="2.7.7.7" evidence="5"/>
<dbReference type="EC" id="4.2.99.-" evidence="7"/>
<dbReference type="EMBL" id="AB099525">
    <property type="protein sequence ID" value="BAD18976.1"/>
    <property type="molecule type" value="mRNA"/>
</dbReference>
<dbReference type="EMBL" id="AP004995">
    <property type="protein sequence ID" value="BAD37891.1"/>
    <property type="molecule type" value="Genomic_DNA"/>
</dbReference>
<dbReference type="EMBL" id="AP008212">
    <property type="protein sequence ID" value="BAF19161.1"/>
    <property type="status" value="ALT_SEQ"/>
    <property type="molecule type" value="Genomic_DNA"/>
</dbReference>
<dbReference type="EMBL" id="AP014962">
    <property type="protein sequence ID" value="BAS96965.1"/>
    <property type="status" value="ALT_SEQ"/>
    <property type="molecule type" value="Genomic_DNA"/>
</dbReference>
<dbReference type="RefSeq" id="XP_015643819.1">
    <property type="nucleotide sequence ID" value="XM_015788333.1"/>
</dbReference>
<dbReference type="SMR" id="Q67VC8"/>
<dbReference type="FunCoup" id="Q67VC8">
    <property type="interactions" value="1896"/>
</dbReference>
<dbReference type="STRING" id="39947.Q67VC8"/>
<dbReference type="PaxDb" id="39947-Q67VC8"/>
<dbReference type="EnsemblPlants" id="Os06t0237200-01">
    <property type="protein sequence ID" value="Os06t0237200-01"/>
    <property type="gene ID" value="Os06g0237200"/>
</dbReference>
<dbReference type="Gramene" id="Os06t0237200-01">
    <property type="protein sequence ID" value="Os06t0237200-01"/>
    <property type="gene ID" value="Os06g0237200"/>
</dbReference>
<dbReference type="KEGG" id="dosa:Os06g0237200"/>
<dbReference type="eggNOG" id="KOG2534">
    <property type="taxonomic scope" value="Eukaryota"/>
</dbReference>
<dbReference type="InParanoid" id="Q67VC8"/>
<dbReference type="OrthoDB" id="205514at2759"/>
<dbReference type="Proteomes" id="UP000000763">
    <property type="component" value="Chromosome 6"/>
</dbReference>
<dbReference type="Proteomes" id="UP000059680">
    <property type="component" value="Chromosome 6"/>
</dbReference>
<dbReference type="GO" id="GO:0005634">
    <property type="term" value="C:nucleus"/>
    <property type="evidence" value="ECO:0000318"/>
    <property type="project" value="GO_Central"/>
</dbReference>
<dbReference type="GO" id="GO:0051575">
    <property type="term" value="F:5'-deoxyribose-5-phosphate lyase activity"/>
    <property type="evidence" value="ECO:0000314"/>
    <property type="project" value="UniProtKB"/>
</dbReference>
<dbReference type="GO" id="GO:0003677">
    <property type="term" value="F:DNA binding"/>
    <property type="evidence" value="ECO:0007669"/>
    <property type="project" value="UniProtKB-KW"/>
</dbReference>
<dbReference type="GO" id="GO:0003887">
    <property type="term" value="F:DNA-directed DNA polymerase activity"/>
    <property type="evidence" value="ECO:0000314"/>
    <property type="project" value="UniProtKB"/>
</dbReference>
<dbReference type="GO" id="GO:0030145">
    <property type="term" value="F:manganese ion binding"/>
    <property type="evidence" value="ECO:0000314"/>
    <property type="project" value="UniProtKB"/>
</dbReference>
<dbReference type="GO" id="GO:0097510">
    <property type="term" value="P:base-excision repair, AP site formation via deaminated base removal"/>
    <property type="evidence" value="ECO:0000314"/>
    <property type="project" value="UniProtKB"/>
</dbReference>
<dbReference type="GO" id="GO:0006260">
    <property type="term" value="P:DNA replication"/>
    <property type="evidence" value="ECO:0007669"/>
    <property type="project" value="UniProtKB-KW"/>
</dbReference>
<dbReference type="GO" id="GO:0006303">
    <property type="term" value="P:double-strand break repair via nonhomologous end joining"/>
    <property type="evidence" value="ECO:0000318"/>
    <property type="project" value="GO_Central"/>
</dbReference>
<dbReference type="GO" id="GO:0006289">
    <property type="term" value="P:nucleotide-excision repair"/>
    <property type="evidence" value="ECO:0007669"/>
    <property type="project" value="EnsemblPlants"/>
</dbReference>
<dbReference type="GO" id="GO:0010224">
    <property type="term" value="P:response to UV-B"/>
    <property type="evidence" value="ECO:0007669"/>
    <property type="project" value="EnsemblPlants"/>
</dbReference>
<dbReference type="CDD" id="cd00141">
    <property type="entry name" value="NT_POLXc"/>
    <property type="match status" value="1"/>
</dbReference>
<dbReference type="FunFam" id="1.10.150.110:FF:000006">
    <property type="entry name" value="DNA polymerase"/>
    <property type="match status" value="1"/>
</dbReference>
<dbReference type="FunFam" id="3.30.210.10:FF:000006">
    <property type="entry name" value="DNA polymerase"/>
    <property type="match status" value="1"/>
</dbReference>
<dbReference type="FunFam" id="3.30.460.10:FF:000029">
    <property type="entry name" value="DNA polymerase"/>
    <property type="match status" value="1"/>
</dbReference>
<dbReference type="FunFam" id="3.40.50.10190:FF:000031">
    <property type="entry name" value="DNA polymerase"/>
    <property type="match status" value="1"/>
</dbReference>
<dbReference type="FunFam" id="1.10.150.20:FF:000010">
    <property type="entry name" value="DNA polymerase lambda"/>
    <property type="match status" value="1"/>
</dbReference>
<dbReference type="Gene3D" id="1.10.150.20">
    <property type="entry name" value="5' to 3' exonuclease, C-terminal subdomain"/>
    <property type="match status" value="1"/>
</dbReference>
<dbReference type="Gene3D" id="3.30.460.10">
    <property type="entry name" value="Beta Polymerase, domain 2"/>
    <property type="match status" value="1"/>
</dbReference>
<dbReference type="Gene3D" id="3.40.50.10190">
    <property type="entry name" value="BRCT domain"/>
    <property type="match status" value="1"/>
</dbReference>
<dbReference type="Gene3D" id="1.10.150.110">
    <property type="entry name" value="DNA polymerase beta, N-terminal domain-like"/>
    <property type="match status" value="1"/>
</dbReference>
<dbReference type="Gene3D" id="3.30.210.10">
    <property type="entry name" value="DNA polymerase, thumb domain"/>
    <property type="match status" value="1"/>
</dbReference>
<dbReference type="InterPro" id="IPR001357">
    <property type="entry name" value="BRCT_dom"/>
</dbReference>
<dbReference type="InterPro" id="IPR036420">
    <property type="entry name" value="BRCT_dom_sf"/>
</dbReference>
<dbReference type="InterPro" id="IPR002054">
    <property type="entry name" value="DNA-dir_DNA_pol_X"/>
</dbReference>
<dbReference type="InterPro" id="IPR019843">
    <property type="entry name" value="DNA_pol-X_BS"/>
</dbReference>
<dbReference type="InterPro" id="IPR010996">
    <property type="entry name" value="DNA_pol_b-like_N"/>
</dbReference>
<dbReference type="InterPro" id="IPR028207">
    <property type="entry name" value="DNA_pol_B_palm_palm"/>
</dbReference>
<dbReference type="InterPro" id="IPR018944">
    <property type="entry name" value="DNA_pol_lambd_fingers_domain"/>
</dbReference>
<dbReference type="InterPro" id="IPR027421">
    <property type="entry name" value="DNA_pol_lamdba_lyase_dom_sf"/>
</dbReference>
<dbReference type="InterPro" id="IPR037160">
    <property type="entry name" value="DNA_Pol_thumb_sf"/>
</dbReference>
<dbReference type="InterPro" id="IPR022312">
    <property type="entry name" value="DNA_pol_X"/>
</dbReference>
<dbReference type="InterPro" id="IPR002008">
    <property type="entry name" value="DNA_pol_X_beta-like"/>
</dbReference>
<dbReference type="InterPro" id="IPR043519">
    <property type="entry name" value="NT_sf"/>
</dbReference>
<dbReference type="InterPro" id="IPR029398">
    <property type="entry name" value="PolB_thumb"/>
</dbReference>
<dbReference type="PANTHER" id="PTHR11276:SF41">
    <property type="entry name" value="DNA POLYMERASE LAMBDA"/>
    <property type="match status" value="1"/>
</dbReference>
<dbReference type="PANTHER" id="PTHR11276">
    <property type="entry name" value="DNA POLYMERASE TYPE-X FAMILY MEMBER"/>
    <property type="match status" value="1"/>
</dbReference>
<dbReference type="Pfam" id="PF14792">
    <property type="entry name" value="DNA_pol_B_palm"/>
    <property type="match status" value="1"/>
</dbReference>
<dbReference type="Pfam" id="PF14791">
    <property type="entry name" value="DNA_pol_B_thumb"/>
    <property type="match status" value="1"/>
</dbReference>
<dbReference type="Pfam" id="PF10391">
    <property type="entry name" value="DNA_pol_lambd_f"/>
    <property type="match status" value="1"/>
</dbReference>
<dbReference type="Pfam" id="PF14716">
    <property type="entry name" value="HHH_8"/>
    <property type="match status" value="1"/>
</dbReference>
<dbReference type="PRINTS" id="PR00869">
    <property type="entry name" value="DNAPOLX"/>
</dbReference>
<dbReference type="PRINTS" id="PR00870">
    <property type="entry name" value="DNAPOLXBETA"/>
</dbReference>
<dbReference type="SMART" id="SM00483">
    <property type="entry name" value="POLXc"/>
    <property type="match status" value="1"/>
</dbReference>
<dbReference type="SUPFAM" id="SSF52113">
    <property type="entry name" value="BRCT domain"/>
    <property type="match status" value="1"/>
</dbReference>
<dbReference type="SUPFAM" id="SSF47802">
    <property type="entry name" value="DNA polymerase beta, N-terminal domain-like"/>
    <property type="match status" value="1"/>
</dbReference>
<dbReference type="SUPFAM" id="SSF81301">
    <property type="entry name" value="Nucleotidyltransferase"/>
    <property type="match status" value="1"/>
</dbReference>
<dbReference type="SUPFAM" id="SSF81585">
    <property type="entry name" value="PsbU/PolX domain-like"/>
    <property type="match status" value="1"/>
</dbReference>
<dbReference type="PROSITE" id="PS50172">
    <property type="entry name" value="BRCT"/>
    <property type="match status" value="1"/>
</dbReference>
<dbReference type="PROSITE" id="PS00522">
    <property type="entry name" value="DNA_POLYMERASE_X"/>
    <property type="match status" value="1"/>
</dbReference>